<organism>
    <name type="scientific">Mycoplasmoides gallisepticum (strain R(low / passage 15 / clone 2))</name>
    <name type="common">Mycoplasma gallisepticum</name>
    <dbReference type="NCBI Taxonomy" id="710127"/>
    <lineage>
        <taxon>Bacteria</taxon>
        <taxon>Bacillati</taxon>
        <taxon>Mycoplasmatota</taxon>
        <taxon>Mycoplasmoidales</taxon>
        <taxon>Mycoplasmoidaceae</taxon>
        <taxon>Mycoplasmoides</taxon>
    </lineage>
</organism>
<comment type="function">
    <text evidence="1">Participates actively in the response to hyperosmotic and heat shock by preventing the aggregation of stress-denatured proteins and by disaggregating proteins, also in an autonomous, DnaK-independent fashion. Unfolded proteins bind initially to DnaJ; upon interaction with the DnaJ-bound protein, DnaK hydrolyzes its bound ATP, resulting in the formation of a stable complex. GrpE releases ADP from DnaK; ATP binding to DnaK triggers the release of the substrate protein, thus completing the reaction cycle. Several rounds of ATP-dependent interactions between DnaJ, DnaK and GrpE are required for fully efficient folding. Also involved, together with DnaK and GrpE, in the DNA replication of plasmids through activation of initiation proteins.</text>
</comment>
<comment type="cofactor">
    <cofactor evidence="1">
        <name>Zn(2+)</name>
        <dbReference type="ChEBI" id="CHEBI:29105"/>
    </cofactor>
    <text evidence="1">Binds 2 Zn(2+) ions per monomer.</text>
</comment>
<comment type="subunit">
    <text evidence="1">Homodimer.</text>
</comment>
<comment type="subcellular location">
    <subcellularLocation>
        <location evidence="1">Cytoplasm</location>
    </subcellularLocation>
</comment>
<comment type="domain">
    <text evidence="1">The J domain is necessary and sufficient to stimulate DnaK ATPase activity. Zinc center 1 plays an important role in the autonomous, DnaK-independent chaperone activity of DnaJ. Zinc center 2 is essential for interaction with DnaK and for DnaJ activity.</text>
</comment>
<comment type="similarity">
    <text evidence="1">Belongs to the DnaJ family.</text>
</comment>
<accession>Q7NBW0</accession>
<gene>
    <name evidence="1" type="primary">dnaJ</name>
    <name type="ordered locus">MYCGA1500</name>
    <name type="ORF">MGA_0877</name>
</gene>
<feature type="chain" id="PRO_0000070823" description="Chaperone protein DnaJ">
    <location>
        <begin position="1"/>
        <end position="391"/>
    </location>
</feature>
<feature type="domain" description="J" evidence="1">
    <location>
        <begin position="6"/>
        <end position="70"/>
    </location>
</feature>
<feature type="repeat" description="CXXCXGXG motif">
    <location>
        <begin position="158"/>
        <end position="165"/>
    </location>
</feature>
<feature type="repeat" description="CXXCXGXG motif">
    <location>
        <begin position="174"/>
        <end position="181"/>
    </location>
</feature>
<feature type="repeat" description="CXXCXGXG motif">
    <location>
        <begin position="200"/>
        <end position="207"/>
    </location>
</feature>
<feature type="repeat" description="CXXCXGXG motif">
    <location>
        <begin position="214"/>
        <end position="221"/>
    </location>
</feature>
<feature type="zinc finger region" description="CR-type" evidence="1">
    <location>
        <begin position="145"/>
        <end position="226"/>
    </location>
</feature>
<feature type="binding site" evidence="1">
    <location>
        <position position="158"/>
    </location>
    <ligand>
        <name>Zn(2+)</name>
        <dbReference type="ChEBI" id="CHEBI:29105"/>
        <label>1</label>
    </ligand>
</feature>
<feature type="binding site" evidence="1">
    <location>
        <position position="161"/>
    </location>
    <ligand>
        <name>Zn(2+)</name>
        <dbReference type="ChEBI" id="CHEBI:29105"/>
        <label>1</label>
    </ligand>
</feature>
<feature type="binding site" evidence="1">
    <location>
        <position position="174"/>
    </location>
    <ligand>
        <name>Zn(2+)</name>
        <dbReference type="ChEBI" id="CHEBI:29105"/>
        <label>2</label>
    </ligand>
</feature>
<feature type="binding site" evidence="1">
    <location>
        <position position="177"/>
    </location>
    <ligand>
        <name>Zn(2+)</name>
        <dbReference type="ChEBI" id="CHEBI:29105"/>
        <label>2</label>
    </ligand>
</feature>
<feature type="binding site" evidence="1">
    <location>
        <position position="200"/>
    </location>
    <ligand>
        <name>Zn(2+)</name>
        <dbReference type="ChEBI" id="CHEBI:29105"/>
        <label>2</label>
    </ligand>
</feature>
<feature type="binding site" evidence="1">
    <location>
        <position position="203"/>
    </location>
    <ligand>
        <name>Zn(2+)</name>
        <dbReference type="ChEBI" id="CHEBI:29105"/>
        <label>2</label>
    </ligand>
</feature>
<feature type="binding site" evidence="1">
    <location>
        <position position="214"/>
    </location>
    <ligand>
        <name>Zn(2+)</name>
        <dbReference type="ChEBI" id="CHEBI:29105"/>
        <label>1</label>
    </ligand>
</feature>
<feature type="binding site" evidence="1">
    <location>
        <position position="217"/>
    </location>
    <ligand>
        <name>Zn(2+)</name>
        <dbReference type="ChEBI" id="CHEBI:29105"/>
        <label>1</label>
    </ligand>
</feature>
<keyword id="KW-0143">Chaperone</keyword>
<keyword id="KW-0963">Cytoplasm</keyword>
<keyword id="KW-0235">DNA replication</keyword>
<keyword id="KW-0479">Metal-binding</keyword>
<keyword id="KW-1185">Reference proteome</keyword>
<keyword id="KW-0677">Repeat</keyword>
<keyword id="KW-0346">Stress response</keyword>
<keyword id="KW-0862">Zinc</keyword>
<keyword id="KW-0863">Zinc-finger</keyword>
<name>DNAJ_MYCGA</name>
<protein>
    <recommendedName>
        <fullName evidence="1">Chaperone protein DnaJ</fullName>
    </recommendedName>
</protein>
<sequence>MSSKRDYYEILEVSRSATQQDIKKAFRKLAMKYHPDRNKDSDAEEKFKEVNEAYEVLSDEEKRKLYDTYGHEGLNASGFHQGGFNPYDVFNSVFSGFDFEGGFGDVFSQFFGGGGSGFHNQEYIEEVDVNLVHEIKINFLEAANGCIKNVKYTRQVTCPDCNGSGSADGDVITCSDCNGEGFLVEQRRTLLGMFQTKKTCPSCKGEGQTIKNKCKKCKSRRMVDEVVERKVSIDSNVFYQDVVIVRGEGHIYKNLVGDLFLRVKIEPSRVFELRDNHVVVNVLVDPLVAITGGTILIPTLKEIKEINLKAGTKNGDIITIANGGINLKLDSRVYGANYNQKGDLIVVINYARPSEYSKQEITKLKEFIKPNKEVNLYETLMKKELNNKDSQ</sequence>
<proteinExistence type="inferred from homology"/>
<reference key="1">
    <citation type="journal article" date="2003" name="Microbiology">
        <title>The complete genome sequence of the avian pathogen Mycoplasma gallisepticum strain R(low).</title>
        <authorList>
            <person name="Papazisi L."/>
            <person name="Gorton T.S."/>
            <person name="Kutish G."/>
            <person name="Markham P.F."/>
            <person name="Browning G.F."/>
            <person name="Nguyen D.K."/>
            <person name="Swartzell S."/>
            <person name="Madan A."/>
            <person name="Mahairas G."/>
            <person name="Geary S.J."/>
        </authorList>
    </citation>
    <scope>NUCLEOTIDE SEQUENCE [LARGE SCALE GENOMIC DNA]</scope>
    <source>
        <strain>R(low / passage 15 / clone 2)</strain>
    </source>
</reference>
<evidence type="ECO:0000255" key="1">
    <source>
        <dbReference type="HAMAP-Rule" id="MF_01152"/>
    </source>
</evidence>
<dbReference type="EMBL" id="AE015450">
    <property type="protein sequence ID" value="AAP56500.2"/>
    <property type="molecule type" value="Genomic_DNA"/>
</dbReference>
<dbReference type="RefSeq" id="WP_011113380.1">
    <property type="nucleotide sequence ID" value="NC_004829.2"/>
</dbReference>
<dbReference type="SMR" id="Q7NBW0"/>
<dbReference type="KEGG" id="mga:MGA_0877"/>
<dbReference type="PATRIC" id="fig|233150.7.peg.164"/>
<dbReference type="HOGENOM" id="CLU_017633_0_7_14"/>
<dbReference type="OrthoDB" id="9779889at2"/>
<dbReference type="Proteomes" id="UP000001418">
    <property type="component" value="Chromosome"/>
</dbReference>
<dbReference type="GO" id="GO:0005737">
    <property type="term" value="C:cytoplasm"/>
    <property type="evidence" value="ECO:0007669"/>
    <property type="project" value="UniProtKB-SubCell"/>
</dbReference>
<dbReference type="GO" id="GO:0005524">
    <property type="term" value="F:ATP binding"/>
    <property type="evidence" value="ECO:0007669"/>
    <property type="project" value="InterPro"/>
</dbReference>
<dbReference type="GO" id="GO:0031072">
    <property type="term" value="F:heat shock protein binding"/>
    <property type="evidence" value="ECO:0007669"/>
    <property type="project" value="InterPro"/>
</dbReference>
<dbReference type="GO" id="GO:0051082">
    <property type="term" value="F:unfolded protein binding"/>
    <property type="evidence" value="ECO:0007669"/>
    <property type="project" value="UniProtKB-UniRule"/>
</dbReference>
<dbReference type="GO" id="GO:0008270">
    <property type="term" value="F:zinc ion binding"/>
    <property type="evidence" value="ECO:0007669"/>
    <property type="project" value="UniProtKB-UniRule"/>
</dbReference>
<dbReference type="GO" id="GO:0051085">
    <property type="term" value="P:chaperone cofactor-dependent protein refolding"/>
    <property type="evidence" value="ECO:0007669"/>
    <property type="project" value="TreeGrafter"/>
</dbReference>
<dbReference type="GO" id="GO:0006260">
    <property type="term" value="P:DNA replication"/>
    <property type="evidence" value="ECO:0007669"/>
    <property type="project" value="UniProtKB-KW"/>
</dbReference>
<dbReference type="GO" id="GO:0042026">
    <property type="term" value="P:protein refolding"/>
    <property type="evidence" value="ECO:0007669"/>
    <property type="project" value="TreeGrafter"/>
</dbReference>
<dbReference type="GO" id="GO:0009408">
    <property type="term" value="P:response to heat"/>
    <property type="evidence" value="ECO:0007669"/>
    <property type="project" value="InterPro"/>
</dbReference>
<dbReference type="CDD" id="cd06257">
    <property type="entry name" value="DnaJ"/>
    <property type="match status" value="1"/>
</dbReference>
<dbReference type="CDD" id="cd10747">
    <property type="entry name" value="DnaJ_C"/>
    <property type="match status" value="1"/>
</dbReference>
<dbReference type="CDD" id="cd10719">
    <property type="entry name" value="DnaJ_zf"/>
    <property type="match status" value="1"/>
</dbReference>
<dbReference type="FunFam" id="1.10.287.110:FF:000031">
    <property type="entry name" value="Molecular chaperone DnaJ"/>
    <property type="match status" value="1"/>
</dbReference>
<dbReference type="FunFam" id="2.10.230.10:FF:000002">
    <property type="entry name" value="Molecular chaperone DnaJ"/>
    <property type="match status" value="1"/>
</dbReference>
<dbReference type="Gene3D" id="1.10.287.110">
    <property type="entry name" value="DnaJ domain"/>
    <property type="match status" value="1"/>
</dbReference>
<dbReference type="Gene3D" id="2.10.230.10">
    <property type="entry name" value="Heat shock protein DnaJ, cysteine-rich domain"/>
    <property type="match status" value="1"/>
</dbReference>
<dbReference type="Gene3D" id="2.60.260.20">
    <property type="entry name" value="Urease metallochaperone UreE, N-terminal domain"/>
    <property type="match status" value="2"/>
</dbReference>
<dbReference type="HAMAP" id="MF_01152">
    <property type="entry name" value="DnaJ"/>
    <property type="match status" value="1"/>
</dbReference>
<dbReference type="InterPro" id="IPR012724">
    <property type="entry name" value="DnaJ"/>
</dbReference>
<dbReference type="InterPro" id="IPR002939">
    <property type="entry name" value="DnaJ_C"/>
</dbReference>
<dbReference type="InterPro" id="IPR001623">
    <property type="entry name" value="DnaJ_domain"/>
</dbReference>
<dbReference type="InterPro" id="IPR018253">
    <property type="entry name" value="DnaJ_domain_CS"/>
</dbReference>
<dbReference type="InterPro" id="IPR008971">
    <property type="entry name" value="HSP40/DnaJ_pept-bd"/>
</dbReference>
<dbReference type="InterPro" id="IPR001305">
    <property type="entry name" value="HSP_DnaJ_Cys-rich_dom"/>
</dbReference>
<dbReference type="InterPro" id="IPR036410">
    <property type="entry name" value="HSP_DnaJ_Cys-rich_dom_sf"/>
</dbReference>
<dbReference type="InterPro" id="IPR036869">
    <property type="entry name" value="J_dom_sf"/>
</dbReference>
<dbReference type="PANTHER" id="PTHR43096:SF48">
    <property type="entry name" value="CHAPERONE PROTEIN DNAJ"/>
    <property type="match status" value="1"/>
</dbReference>
<dbReference type="PANTHER" id="PTHR43096">
    <property type="entry name" value="DNAJ HOMOLOG 1, MITOCHONDRIAL-RELATED"/>
    <property type="match status" value="1"/>
</dbReference>
<dbReference type="Pfam" id="PF00226">
    <property type="entry name" value="DnaJ"/>
    <property type="match status" value="1"/>
</dbReference>
<dbReference type="Pfam" id="PF01556">
    <property type="entry name" value="DnaJ_C"/>
    <property type="match status" value="1"/>
</dbReference>
<dbReference type="Pfam" id="PF00684">
    <property type="entry name" value="DnaJ_CXXCXGXG"/>
    <property type="match status" value="1"/>
</dbReference>
<dbReference type="PRINTS" id="PR00625">
    <property type="entry name" value="JDOMAIN"/>
</dbReference>
<dbReference type="SMART" id="SM00271">
    <property type="entry name" value="DnaJ"/>
    <property type="match status" value="1"/>
</dbReference>
<dbReference type="SUPFAM" id="SSF46565">
    <property type="entry name" value="Chaperone J-domain"/>
    <property type="match status" value="1"/>
</dbReference>
<dbReference type="SUPFAM" id="SSF57938">
    <property type="entry name" value="DnaJ/Hsp40 cysteine-rich domain"/>
    <property type="match status" value="1"/>
</dbReference>
<dbReference type="SUPFAM" id="SSF49493">
    <property type="entry name" value="HSP40/DnaJ peptide-binding domain"/>
    <property type="match status" value="2"/>
</dbReference>
<dbReference type="PROSITE" id="PS00636">
    <property type="entry name" value="DNAJ_1"/>
    <property type="match status" value="1"/>
</dbReference>
<dbReference type="PROSITE" id="PS50076">
    <property type="entry name" value="DNAJ_2"/>
    <property type="match status" value="1"/>
</dbReference>
<dbReference type="PROSITE" id="PS51188">
    <property type="entry name" value="ZF_CR"/>
    <property type="match status" value="1"/>
</dbReference>